<feature type="transit peptide" description="Chloroplast" evidence="1">
    <location>
        <begin position="1"/>
        <end position="46"/>
    </location>
</feature>
<feature type="chain" id="PRO_0000425142" description="Protein LPA2">
    <location>
        <begin position="47"/>
        <end position="185"/>
    </location>
</feature>
<feature type="transmembrane region" description="Helical" evidence="1">
    <location>
        <begin position="115"/>
        <end position="135"/>
    </location>
</feature>
<feature type="transmembrane region" description="Helical" evidence="1">
    <location>
        <begin position="152"/>
        <end position="172"/>
    </location>
</feature>
<feature type="region of interest" description="Disordered" evidence="2">
    <location>
        <begin position="35"/>
        <end position="105"/>
    </location>
</feature>
<feature type="compositionally biased region" description="Low complexity" evidence="2">
    <location>
        <begin position="47"/>
        <end position="75"/>
    </location>
</feature>
<feature type="compositionally biased region" description="Basic and acidic residues" evidence="2">
    <location>
        <begin position="83"/>
        <end position="92"/>
    </location>
</feature>
<gene>
    <name evidence="3" type="primary">LPA2</name>
    <name type="ordered locus">At5g51545</name>
    <name type="ORF">K17N15.9</name>
</gene>
<protein>
    <recommendedName>
        <fullName evidence="4">Protein LPA2</fullName>
    </recommendedName>
    <alternativeName>
        <fullName evidence="3">Protein LOW PSII ACCUMULATION 2, chloroplastic</fullName>
    </alternativeName>
</protein>
<sequence length="185" mass="20213">MALQIHSPCSFSTRPYHLFFTTRNPRFAIKCQNSQIESDTTEDPSRSKNSSSSGVGFGSPASSSSPAKKLSAATSGNKKGKGKREVNRRAPVEKPVFMSEEGAAKAEEQRQNENAFLLTWLGLGIVILIEGIILAASGFLPEELDKLFVKYVYPVFTPSVVLFVAGTTAYGVLKYIQNEKMKGQE</sequence>
<dbReference type="EMBL" id="AB018109">
    <property type="protein sequence ID" value="BAB08670.1"/>
    <property type="status" value="ALT_SEQ"/>
    <property type="molecule type" value="Genomic_DNA"/>
</dbReference>
<dbReference type="EMBL" id="CP002688">
    <property type="protein sequence ID" value="AED96096.1"/>
    <property type="molecule type" value="Genomic_DNA"/>
</dbReference>
<dbReference type="EMBL" id="AK229296">
    <property type="protein sequence ID" value="BAF01159.1"/>
    <property type="molecule type" value="mRNA"/>
</dbReference>
<dbReference type="RefSeq" id="NP_001032057.1">
    <property type="nucleotide sequence ID" value="NM_001036980.3"/>
</dbReference>
<dbReference type="FunCoup" id="F4KDA6">
    <property type="interactions" value="1405"/>
</dbReference>
<dbReference type="STRING" id="3702.F4KDA6"/>
<dbReference type="MEROPS" id="M03.A12"/>
<dbReference type="iPTMnet" id="F4KDA6"/>
<dbReference type="PaxDb" id="3702-AT5G51545.1"/>
<dbReference type="ProteomicsDB" id="238496"/>
<dbReference type="EnsemblPlants" id="AT5G51545.1">
    <property type="protein sequence ID" value="AT5G51545.1"/>
    <property type="gene ID" value="AT5G51545"/>
</dbReference>
<dbReference type="GeneID" id="3771487"/>
<dbReference type="Gramene" id="AT5G51545.1">
    <property type="protein sequence ID" value="AT5G51545.1"/>
    <property type="gene ID" value="AT5G51545"/>
</dbReference>
<dbReference type="KEGG" id="ath:AT5G51545"/>
<dbReference type="Araport" id="AT5G51545"/>
<dbReference type="TAIR" id="AT5G51545">
    <property type="gene designation" value="LPA2"/>
</dbReference>
<dbReference type="eggNOG" id="KOG2090">
    <property type="taxonomic scope" value="Eukaryota"/>
</dbReference>
<dbReference type="HOGENOM" id="CLU_096250_0_0_1"/>
<dbReference type="InParanoid" id="F4KDA6"/>
<dbReference type="OMA" id="AMPSIMG"/>
<dbReference type="OrthoDB" id="568307at2759"/>
<dbReference type="PhylomeDB" id="F4KDA6"/>
<dbReference type="PRO" id="PR:F4KDA6"/>
<dbReference type="Proteomes" id="UP000006548">
    <property type="component" value="Chromosome 5"/>
</dbReference>
<dbReference type="ExpressionAtlas" id="F4KDA6">
    <property type="expression patterns" value="baseline and differential"/>
</dbReference>
<dbReference type="GO" id="GO:0009507">
    <property type="term" value="C:chloroplast"/>
    <property type="evidence" value="ECO:0007005"/>
    <property type="project" value="TAIR"/>
</dbReference>
<dbReference type="GO" id="GO:0031969">
    <property type="term" value="C:chloroplast membrane"/>
    <property type="evidence" value="ECO:0007669"/>
    <property type="project" value="UniProtKB-SubCell"/>
</dbReference>
<dbReference type="GO" id="GO:0009534">
    <property type="term" value="C:chloroplast thylakoid"/>
    <property type="evidence" value="ECO:0007005"/>
    <property type="project" value="TAIR"/>
</dbReference>
<dbReference type="GO" id="GO:0009536">
    <property type="term" value="C:plastid"/>
    <property type="evidence" value="ECO:0007005"/>
    <property type="project" value="TAIR"/>
</dbReference>
<dbReference type="InterPro" id="IPR038789">
    <property type="entry name" value="LPA2-like"/>
</dbReference>
<dbReference type="PANTHER" id="PTHR37385">
    <property type="entry name" value="PROTEIN LOW PSII ACCUMULATION 2, CHLOROPLASTIC"/>
    <property type="match status" value="1"/>
</dbReference>
<dbReference type="PANTHER" id="PTHR37385:SF2">
    <property type="entry name" value="PROTEIN LPA2"/>
    <property type="match status" value="1"/>
</dbReference>
<proteinExistence type="evidence at transcript level"/>
<organism>
    <name type="scientific">Arabidopsis thaliana</name>
    <name type="common">Mouse-ear cress</name>
    <dbReference type="NCBI Taxonomy" id="3702"/>
    <lineage>
        <taxon>Eukaryota</taxon>
        <taxon>Viridiplantae</taxon>
        <taxon>Streptophyta</taxon>
        <taxon>Embryophyta</taxon>
        <taxon>Tracheophyta</taxon>
        <taxon>Spermatophyta</taxon>
        <taxon>Magnoliopsida</taxon>
        <taxon>eudicotyledons</taxon>
        <taxon>Gunneridae</taxon>
        <taxon>Pentapetalae</taxon>
        <taxon>rosids</taxon>
        <taxon>malvids</taxon>
        <taxon>Brassicales</taxon>
        <taxon>Brassicaceae</taxon>
        <taxon>Camelineae</taxon>
        <taxon>Arabidopsis</taxon>
    </lineage>
</organism>
<name>LPA2_ARATH</name>
<reference key="1">
    <citation type="journal article" date="2000" name="DNA Res.">
        <title>Structural analysis of Arabidopsis thaliana chromosome 5. X. Sequence features of the regions of 3,076,755 bp covered by sixty P1 and TAC clones.</title>
        <authorList>
            <person name="Sato S."/>
            <person name="Nakamura Y."/>
            <person name="Kaneko T."/>
            <person name="Katoh T."/>
            <person name="Asamizu E."/>
            <person name="Kotani H."/>
            <person name="Tabata S."/>
        </authorList>
    </citation>
    <scope>NUCLEOTIDE SEQUENCE [LARGE SCALE GENOMIC DNA]</scope>
    <source>
        <strain>cv. Columbia</strain>
    </source>
</reference>
<reference key="2">
    <citation type="journal article" date="2017" name="Plant J.">
        <title>Araport11: a complete reannotation of the Arabidopsis thaliana reference genome.</title>
        <authorList>
            <person name="Cheng C.Y."/>
            <person name="Krishnakumar V."/>
            <person name="Chan A.P."/>
            <person name="Thibaud-Nissen F."/>
            <person name="Schobel S."/>
            <person name="Town C.D."/>
        </authorList>
    </citation>
    <scope>GENOME REANNOTATION</scope>
    <source>
        <strain>cv. Columbia</strain>
    </source>
</reference>
<reference key="3">
    <citation type="submission" date="2006-07" db="EMBL/GenBank/DDBJ databases">
        <title>Large-scale analysis of RIKEN Arabidopsis full-length (RAFL) cDNAs.</title>
        <authorList>
            <person name="Totoki Y."/>
            <person name="Seki M."/>
            <person name="Ishida J."/>
            <person name="Nakajima M."/>
            <person name="Enju A."/>
            <person name="Kamiya A."/>
            <person name="Narusaka M."/>
            <person name="Shin-i T."/>
            <person name="Nakagawa M."/>
            <person name="Sakamoto N."/>
            <person name="Oishi K."/>
            <person name="Kohara Y."/>
            <person name="Kobayashi M."/>
            <person name="Toyoda A."/>
            <person name="Sakaki Y."/>
            <person name="Sakurai T."/>
            <person name="Iida K."/>
            <person name="Akiyama K."/>
            <person name="Satou M."/>
            <person name="Toyoda T."/>
            <person name="Konagaya A."/>
            <person name="Carninci P."/>
            <person name="Kawai J."/>
            <person name="Hayashizaki Y."/>
            <person name="Shinozaki K."/>
        </authorList>
    </citation>
    <scope>NUCLEOTIDE SEQUENCE [LARGE SCALE MRNA] OF 17-185</scope>
    <source>
        <strain>cv. Columbia</strain>
    </source>
</reference>
<reference key="4">
    <citation type="journal article" date="2007" name="Plant Cell">
        <title>LPA2 is required for efficient assembly of photosystem II in Arabidopsis thaliana.</title>
        <authorList>
            <person name="Ma J."/>
            <person name="Peng L."/>
            <person name="Guo J."/>
            <person name="Lu Q."/>
            <person name="Lu C."/>
            <person name="Zhang L."/>
        </authorList>
    </citation>
    <scope>RETRACTED PAPER</scope>
</reference>
<reference key="5">
    <citation type="journal article" date="2016" name="Plant Cell">
        <authorList>
            <person name="Ma J."/>
            <person name="Peng L."/>
            <person name="Guo J."/>
            <person name="Lu Q."/>
            <person name="Lu C."/>
            <person name="Zhang L."/>
        </authorList>
    </citation>
    <scope>RETRACTION NOTICE OF PUBMED:17601825</scope>
</reference>
<reference key="6">
    <citation type="journal article" date="2010" name="Plant Physiol.">
        <title>Cooperation of LPA3 and LPA2 is essential for photosystem II assembly in Arabidopsis.</title>
        <authorList>
            <person name="Cai W."/>
            <person name="Ma J."/>
            <person name="Chi W."/>
            <person name="Zou M."/>
            <person name="Guo J."/>
            <person name="Lu C."/>
            <person name="Zhang L."/>
        </authorList>
    </citation>
    <scope>RETRACTED PAPER</scope>
</reference>
<reference key="7">
    <citation type="journal article" date="2017" name="Plant Physiol.">
        <authorList>
            <person name="Cai W."/>
            <person name="Ma J."/>
            <person name="Chi W."/>
            <person name="Zou M."/>
            <person name="Guo J."/>
            <person name="Lu C."/>
            <person name="Zhang L."/>
        </authorList>
    </citation>
    <scope>RETRACTION NOTICE OF PUBMED:20605914</scope>
</reference>
<evidence type="ECO:0000255" key="1"/>
<evidence type="ECO:0000256" key="2">
    <source>
        <dbReference type="SAM" id="MobiDB-lite"/>
    </source>
</evidence>
<evidence type="ECO:0000303" key="3">
    <source>
    </source>
</evidence>
<evidence type="ECO:0000305" key="4"/>
<evidence type="ECO:0000305" key="5">
    <source>
    </source>
</evidence>
<evidence type="ECO:0000305" key="6">
    <source>
    </source>
</evidence>
<evidence type="ECO:0000305" key="7">
    <source>
    </source>
</evidence>
<evidence type="ECO:0000305" key="8">
    <source>
    </source>
</evidence>
<comment type="subcellular location">
    <subcellularLocation>
        <location evidence="4">Plastid</location>
        <location evidence="4">Chloroplast membrane</location>
        <topology evidence="1">Multi-pass membrane protein</topology>
    </subcellularLocation>
</comment>
<comment type="caution">
    <text evidence="5 6 7 8">A paper reported a role in assisting chlorophyll a binding protein psbC assembly within photosystem II (PSII); however, this paper was later retracted. An article reported an interaction with LPA3; however, this paper was later retracted.</text>
</comment>
<comment type="sequence caution" evidence="4">
    <conflict type="erroneous gene model prediction">
        <sequence resource="EMBL-CDS" id="BAB08670"/>
    </conflict>
    <text>The predicted gene At5g51540 has been split into 2 genes: At5g51540 and At5g51545.</text>
</comment>
<keyword id="KW-0150">Chloroplast</keyword>
<keyword id="KW-0472">Membrane</keyword>
<keyword id="KW-0934">Plastid</keyword>
<keyword id="KW-1185">Reference proteome</keyword>
<keyword id="KW-0809">Transit peptide</keyword>
<keyword id="KW-0812">Transmembrane</keyword>
<keyword id="KW-1133">Transmembrane helix</keyword>
<accession>F4KDA6</accession>
<accession>Q0WNZ0</accession>
<accession>Q9FHN0</accession>